<name>RL7_CLOAB</name>
<proteinExistence type="inferred from homology"/>
<keyword id="KW-1185">Reference proteome</keyword>
<keyword id="KW-0687">Ribonucleoprotein</keyword>
<keyword id="KW-0689">Ribosomal protein</keyword>
<dbReference type="EMBL" id="AE001437">
    <property type="protein sequence ID" value="AAK81082.1"/>
    <property type="molecule type" value="Genomic_DNA"/>
</dbReference>
<dbReference type="PIR" id="G97286">
    <property type="entry name" value="G97286"/>
</dbReference>
<dbReference type="RefSeq" id="NP_349742.1">
    <property type="nucleotide sequence ID" value="NC_003030.1"/>
</dbReference>
<dbReference type="RefSeq" id="WP_010966422.1">
    <property type="nucleotide sequence ID" value="NC_003030.1"/>
</dbReference>
<dbReference type="SMR" id="Q97EG8"/>
<dbReference type="STRING" id="272562.CA_C3145"/>
<dbReference type="GeneID" id="44999630"/>
<dbReference type="KEGG" id="cac:CA_C3145"/>
<dbReference type="PATRIC" id="fig|272562.8.peg.3325"/>
<dbReference type="eggNOG" id="COG0222">
    <property type="taxonomic scope" value="Bacteria"/>
</dbReference>
<dbReference type="HOGENOM" id="CLU_086499_3_2_9"/>
<dbReference type="OrthoDB" id="9811748at2"/>
<dbReference type="Proteomes" id="UP000000814">
    <property type="component" value="Chromosome"/>
</dbReference>
<dbReference type="GO" id="GO:0022625">
    <property type="term" value="C:cytosolic large ribosomal subunit"/>
    <property type="evidence" value="ECO:0007669"/>
    <property type="project" value="TreeGrafter"/>
</dbReference>
<dbReference type="GO" id="GO:0003729">
    <property type="term" value="F:mRNA binding"/>
    <property type="evidence" value="ECO:0007669"/>
    <property type="project" value="TreeGrafter"/>
</dbReference>
<dbReference type="GO" id="GO:0003735">
    <property type="term" value="F:structural constituent of ribosome"/>
    <property type="evidence" value="ECO:0007669"/>
    <property type="project" value="InterPro"/>
</dbReference>
<dbReference type="GO" id="GO:0006412">
    <property type="term" value="P:translation"/>
    <property type="evidence" value="ECO:0007669"/>
    <property type="project" value="UniProtKB-UniRule"/>
</dbReference>
<dbReference type="CDD" id="cd00387">
    <property type="entry name" value="Ribosomal_L7_L12"/>
    <property type="match status" value="1"/>
</dbReference>
<dbReference type="FunFam" id="1.20.5.710:FF:000002">
    <property type="entry name" value="50S ribosomal protein L7/L12"/>
    <property type="match status" value="1"/>
</dbReference>
<dbReference type="FunFam" id="3.30.1390.10:FF:000001">
    <property type="entry name" value="50S ribosomal protein L7/L12"/>
    <property type="match status" value="1"/>
</dbReference>
<dbReference type="Gene3D" id="3.30.1390.10">
    <property type="match status" value="1"/>
</dbReference>
<dbReference type="Gene3D" id="1.20.5.710">
    <property type="entry name" value="Single helix bin"/>
    <property type="match status" value="1"/>
</dbReference>
<dbReference type="HAMAP" id="MF_00368">
    <property type="entry name" value="Ribosomal_bL12"/>
    <property type="match status" value="1"/>
</dbReference>
<dbReference type="InterPro" id="IPR000206">
    <property type="entry name" value="Ribosomal_bL12"/>
</dbReference>
<dbReference type="InterPro" id="IPR013823">
    <property type="entry name" value="Ribosomal_bL12_C"/>
</dbReference>
<dbReference type="InterPro" id="IPR014719">
    <property type="entry name" value="Ribosomal_bL12_C/ClpS-like"/>
</dbReference>
<dbReference type="InterPro" id="IPR008932">
    <property type="entry name" value="Ribosomal_bL12_oligo"/>
</dbReference>
<dbReference type="InterPro" id="IPR036235">
    <property type="entry name" value="Ribosomal_bL12_oligo_N_sf"/>
</dbReference>
<dbReference type="NCBIfam" id="TIGR00855">
    <property type="entry name" value="L12"/>
    <property type="match status" value="1"/>
</dbReference>
<dbReference type="PANTHER" id="PTHR45987">
    <property type="entry name" value="39S RIBOSOMAL PROTEIN L12"/>
    <property type="match status" value="1"/>
</dbReference>
<dbReference type="PANTHER" id="PTHR45987:SF4">
    <property type="entry name" value="LARGE RIBOSOMAL SUBUNIT PROTEIN BL12M"/>
    <property type="match status" value="1"/>
</dbReference>
<dbReference type="Pfam" id="PF00542">
    <property type="entry name" value="Ribosomal_L12"/>
    <property type="match status" value="1"/>
</dbReference>
<dbReference type="Pfam" id="PF16320">
    <property type="entry name" value="Ribosomal_L12_N"/>
    <property type="match status" value="1"/>
</dbReference>
<dbReference type="SUPFAM" id="SSF54736">
    <property type="entry name" value="ClpS-like"/>
    <property type="match status" value="1"/>
</dbReference>
<dbReference type="SUPFAM" id="SSF48300">
    <property type="entry name" value="Ribosomal protein L7/12, oligomerisation (N-terminal) domain"/>
    <property type="match status" value="1"/>
</dbReference>
<sequence length="123" mass="12621">MTREEIIEAIKGMSVLELNELVKACEEEFGVSAAAPVAVAGAAGAAGAAAGEEKTEFDVVLAEAGAKKLQVIKVVRELTGLGLKDAKALVDGAPKTIKEGVAKEEAESMKAKIEEAGGKVELK</sequence>
<gene>
    <name evidence="1" type="primary">rplL</name>
    <name type="ordered locus">CA_C3145</name>
</gene>
<reference key="1">
    <citation type="journal article" date="2001" name="J. Bacteriol.">
        <title>Genome sequence and comparative analysis of the solvent-producing bacterium Clostridium acetobutylicum.</title>
        <authorList>
            <person name="Noelling J."/>
            <person name="Breton G."/>
            <person name="Omelchenko M.V."/>
            <person name="Makarova K.S."/>
            <person name="Zeng Q."/>
            <person name="Gibson R."/>
            <person name="Lee H.M."/>
            <person name="Dubois J."/>
            <person name="Qiu D."/>
            <person name="Hitti J."/>
            <person name="Wolf Y.I."/>
            <person name="Tatusov R.L."/>
            <person name="Sabathe F."/>
            <person name="Doucette-Stamm L.A."/>
            <person name="Soucaille P."/>
            <person name="Daly M.J."/>
            <person name="Bennett G.N."/>
            <person name="Koonin E.V."/>
            <person name="Smith D.R."/>
        </authorList>
    </citation>
    <scope>NUCLEOTIDE SEQUENCE [LARGE SCALE GENOMIC DNA]</scope>
    <source>
        <strain>ATCC 824 / DSM 792 / JCM 1419 / IAM 19013 / LMG 5710 / NBRC 13948 / NRRL B-527 / VKM B-1787 / 2291 / W</strain>
    </source>
</reference>
<protein>
    <recommendedName>
        <fullName evidence="1">Large ribosomal subunit protein bL12</fullName>
    </recommendedName>
    <alternativeName>
        <fullName evidence="2">50S ribosomal protein L7/L12</fullName>
    </alternativeName>
</protein>
<accession>Q97EG8</accession>
<evidence type="ECO:0000255" key="1">
    <source>
        <dbReference type="HAMAP-Rule" id="MF_00368"/>
    </source>
</evidence>
<evidence type="ECO:0000305" key="2"/>
<comment type="function">
    <text evidence="1">Forms part of the ribosomal stalk which helps the ribosome interact with GTP-bound translation factors. Is thus essential for accurate translation.</text>
</comment>
<comment type="subunit">
    <text evidence="1">Homodimer. Part of the ribosomal stalk of the 50S ribosomal subunit. Forms a multimeric L10(L12)X complex, where L10 forms an elongated spine to which 2 to 4 L12 dimers bind in a sequential fashion. Binds GTP-bound translation factors.</text>
</comment>
<comment type="similarity">
    <text evidence="1">Belongs to the bacterial ribosomal protein bL12 family.</text>
</comment>
<feature type="chain" id="PRO_0000157521" description="Large ribosomal subunit protein bL12">
    <location>
        <begin position="1"/>
        <end position="123"/>
    </location>
</feature>
<organism>
    <name type="scientific">Clostridium acetobutylicum (strain ATCC 824 / DSM 792 / JCM 1419 / IAM 19013 / LMG 5710 / NBRC 13948 / NRRL B-527 / VKM B-1787 / 2291 / W)</name>
    <dbReference type="NCBI Taxonomy" id="272562"/>
    <lineage>
        <taxon>Bacteria</taxon>
        <taxon>Bacillati</taxon>
        <taxon>Bacillota</taxon>
        <taxon>Clostridia</taxon>
        <taxon>Eubacteriales</taxon>
        <taxon>Clostridiaceae</taxon>
        <taxon>Clostridium</taxon>
    </lineage>
</organism>